<comment type="function">
    <text evidence="1">Catalyzes the NADPH-dependent rearrangement and reduction of 1-deoxy-D-xylulose-5-phosphate (DXP) to 2-C-methyl-D-erythritol 4-phosphate (MEP).</text>
</comment>
<comment type="catalytic activity">
    <reaction evidence="1">
        <text>2-C-methyl-D-erythritol 4-phosphate + NADP(+) = 1-deoxy-D-xylulose 5-phosphate + NADPH + H(+)</text>
        <dbReference type="Rhea" id="RHEA:13717"/>
        <dbReference type="ChEBI" id="CHEBI:15378"/>
        <dbReference type="ChEBI" id="CHEBI:57783"/>
        <dbReference type="ChEBI" id="CHEBI:57792"/>
        <dbReference type="ChEBI" id="CHEBI:58262"/>
        <dbReference type="ChEBI" id="CHEBI:58349"/>
        <dbReference type="EC" id="1.1.1.267"/>
    </reaction>
    <physiologicalReaction direction="right-to-left" evidence="1">
        <dbReference type="Rhea" id="RHEA:13719"/>
    </physiologicalReaction>
</comment>
<comment type="cofactor">
    <cofactor evidence="1">
        <name>Mg(2+)</name>
        <dbReference type="ChEBI" id="CHEBI:18420"/>
    </cofactor>
    <cofactor evidence="1">
        <name>Mn(2+)</name>
        <dbReference type="ChEBI" id="CHEBI:29035"/>
    </cofactor>
</comment>
<comment type="pathway">
    <text evidence="1">Isoprenoid biosynthesis; isopentenyl diphosphate biosynthesis via DXP pathway; isopentenyl diphosphate from 1-deoxy-D-xylulose 5-phosphate: step 1/6.</text>
</comment>
<comment type="subunit">
    <text evidence="1">Homodimer.</text>
</comment>
<comment type="similarity">
    <text evidence="1">Belongs to the DXR family.</text>
</comment>
<keyword id="KW-0414">Isoprene biosynthesis</keyword>
<keyword id="KW-0464">Manganese</keyword>
<keyword id="KW-0479">Metal-binding</keyword>
<keyword id="KW-0521">NADP</keyword>
<keyword id="KW-0560">Oxidoreductase</keyword>
<keyword id="KW-1185">Reference proteome</keyword>
<proteinExistence type="inferred from homology"/>
<gene>
    <name evidence="1" type="primary">dxr</name>
    <name type="ordered locus">plu0676</name>
</gene>
<feature type="chain" id="PRO_0000163690" description="1-deoxy-D-xylulose 5-phosphate reductoisomerase">
    <location>
        <begin position="1"/>
        <end position="398"/>
    </location>
</feature>
<feature type="binding site" evidence="1">
    <location>
        <position position="10"/>
    </location>
    <ligand>
        <name>NADPH</name>
        <dbReference type="ChEBI" id="CHEBI:57783"/>
    </ligand>
</feature>
<feature type="binding site" evidence="1">
    <location>
        <position position="11"/>
    </location>
    <ligand>
        <name>NADPH</name>
        <dbReference type="ChEBI" id="CHEBI:57783"/>
    </ligand>
</feature>
<feature type="binding site" evidence="1">
    <location>
        <position position="12"/>
    </location>
    <ligand>
        <name>NADPH</name>
        <dbReference type="ChEBI" id="CHEBI:57783"/>
    </ligand>
</feature>
<feature type="binding site" evidence="1">
    <location>
        <position position="13"/>
    </location>
    <ligand>
        <name>NADPH</name>
        <dbReference type="ChEBI" id="CHEBI:57783"/>
    </ligand>
</feature>
<feature type="binding site" evidence="1">
    <location>
        <position position="36"/>
    </location>
    <ligand>
        <name>NADPH</name>
        <dbReference type="ChEBI" id="CHEBI:57783"/>
    </ligand>
</feature>
<feature type="binding site" evidence="1">
    <location>
        <position position="37"/>
    </location>
    <ligand>
        <name>NADPH</name>
        <dbReference type="ChEBI" id="CHEBI:57783"/>
    </ligand>
</feature>
<feature type="binding site" evidence="1">
    <location>
        <position position="38"/>
    </location>
    <ligand>
        <name>NADPH</name>
        <dbReference type="ChEBI" id="CHEBI:57783"/>
    </ligand>
</feature>
<feature type="binding site" evidence="1">
    <location>
        <position position="124"/>
    </location>
    <ligand>
        <name>NADPH</name>
        <dbReference type="ChEBI" id="CHEBI:57783"/>
    </ligand>
</feature>
<feature type="binding site" evidence="1">
    <location>
        <position position="125"/>
    </location>
    <ligand>
        <name>1-deoxy-D-xylulose 5-phosphate</name>
        <dbReference type="ChEBI" id="CHEBI:57792"/>
    </ligand>
</feature>
<feature type="binding site" evidence="1">
    <location>
        <position position="126"/>
    </location>
    <ligand>
        <name>NADPH</name>
        <dbReference type="ChEBI" id="CHEBI:57783"/>
    </ligand>
</feature>
<feature type="binding site" evidence="1">
    <location>
        <position position="150"/>
    </location>
    <ligand>
        <name>Mn(2+)</name>
        <dbReference type="ChEBI" id="CHEBI:29035"/>
    </ligand>
</feature>
<feature type="binding site" evidence="1">
    <location>
        <position position="151"/>
    </location>
    <ligand>
        <name>1-deoxy-D-xylulose 5-phosphate</name>
        <dbReference type="ChEBI" id="CHEBI:57792"/>
    </ligand>
</feature>
<feature type="binding site" evidence="1">
    <location>
        <position position="152"/>
    </location>
    <ligand>
        <name>1-deoxy-D-xylulose 5-phosphate</name>
        <dbReference type="ChEBI" id="CHEBI:57792"/>
    </ligand>
</feature>
<feature type="binding site" evidence="1">
    <location>
        <position position="152"/>
    </location>
    <ligand>
        <name>Mn(2+)</name>
        <dbReference type="ChEBI" id="CHEBI:29035"/>
    </ligand>
</feature>
<feature type="binding site" evidence="1">
    <location>
        <position position="186"/>
    </location>
    <ligand>
        <name>1-deoxy-D-xylulose 5-phosphate</name>
        <dbReference type="ChEBI" id="CHEBI:57792"/>
    </ligand>
</feature>
<feature type="binding site" evidence="1">
    <location>
        <position position="209"/>
    </location>
    <ligand>
        <name>1-deoxy-D-xylulose 5-phosphate</name>
        <dbReference type="ChEBI" id="CHEBI:57792"/>
    </ligand>
</feature>
<feature type="binding site" evidence="1">
    <location>
        <position position="215"/>
    </location>
    <ligand>
        <name>NADPH</name>
        <dbReference type="ChEBI" id="CHEBI:57783"/>
    </ligand>
</feature>
<feature type="binding site" evidence="1">
    <location>
        <position position="222"/>
    </location>
    <ligand>
        <name>1-deoxy-D-xylulose 5-phosphate</name>
        <dbReference type="ChEBI" id="CHEBI:57792"/>
    </ligand>
</feature>
<feature type="binding site" evidence="1">
    <location>
        <position position="227"/>
    </location>
    <ligand>
        <name>1-deoxy-D-xylulose 5-phosphate</name>
        <dbReference type="ChEBI" id="CHEBI:57792"/>
    </ligand>
</feature>
<feature type="binding site" evidence="1">
    <location>
        <position position="228"/>
    </location>
    <ligand>
        <name>1-deoxy-D-xylulose 5-phosphate</name>
        <dbReference type="ChEBI" id="CHEBI:57792"/>
    </ligand>
</feature>
<feature type="binding site" evidence="1">
    <location>
        <position position="231"/>
    </location>
    <ligand>
        <name>1-deoxy-D-xylulose 5-phosphate</name>
        <dbReference type="ChEBI" id="CHEBI:57792"/>
    </ligand>
</feature>
<feature type="binding site" evidence="1">
    <location>
        <position position="231"/>
    </location>
    <ligand>
        <name>Mn(2+)</name>
        <dbReference type="ChEBI" id="CHEBI:29035"/>
    </ligand>
</feature>
<organism>
    <name type="scientific">Photorhabdus laumondii subsp. laumondii (strain DSM 15139 / CIP 105565 / TT01)</name>
    <name type="common">Photorhabdus luminescens subsp. laumondii</name>
    <dbReference type="NCBI Taxonomy" id="243265"/>
    <lineage>
        <taxon>Bacteria</taxon>
        <taxon>Pseudomonadati</taxon>
        <taxon>Pseudomonadota</taxon>
        <taxon>Gammaproteobacteria</taxon>
        <taxon>Enterobacterales</taxon>
        <taxon>Morganellaceae</taxon>
        <taxon>Photorhabdus</taxon>
    </lineage>
</organism>
<dbReference type="EC" id="1.1.1.267" evidence="1"/>
<dbReference type="EMBL" id="BX571861">
    <property type="protein sequence ID" value="CAE12971.1"/>
    <property type="molecule type" value="Genomic_DNA"/>
</dbReference>
<dbReference type="RefSeq" id="WP_011145052.1">
    <property type="nucleotide sequence ID" value="NC_005126.1"/>
</dbReference>
<dbReference type="SMR" id="Q7N8P3"/>
<dbReference type="STRING" id="243265.plu0676"/>
<dbReference type="GeneID" id="48846965"/>
<dbReference type="KEGG" id="plu:plu0676"/>
<dbReference type="eggNOG" id="COG0743">
    <property type="taxonomic scope" value="Bacteria"/>
</dbReference>
<dbReference type="HOGENOM" id="CLU_035714_4_0_6"/>
<dbReference type="OrthoDB" id="9806546at2"/>
<dbReference type="UniPathway" id="UPA00056">
    <property type="reaction ID" value="UER00092"/>
</dbReference>
<dbReference type="Proteomes" id="UP000002514">
    <property type="component" value="Chromosome"/>
</dbReference>
<dbReference type="GO" id="GO:0030604">
    <property type="term" value="F:1-deoxy-D-xylulose-5-phosphate reductoisomerase activity"/>
    <property type="evidence" value="ECO:0007669"/>
    <property type="project" value="UniProtKB-UniRule"/>
</dbReference>
<dbReference type="GO" id="GO:0030145">
    <property type="term" value="F:manganese ion binding"/>
    <property type="evidence" value="ECO:0007669"/>
    <property type="project" value="TreeGrafter"/>
</dbReference>
<dbReference type="GO" id="GO:0070402">
    <property type="term" value="F:NADPH binding"/>
    <property type="evidence" value="ECO:0007669"/>
    <property type="project" value="InterPro"/>
</dbReference>
<dbReference type="GO" id="GO:0051484">
    <property type="term" value="P:isopentenyl diphosphate biosynthetic process, methylerythritol 4-phosphate pathway involved in terpenoid biosynthetic process"/>
    <property type="evidence" value="ECO:0007669"/>
    <property type="project" value="TreeGrafter"/>
</dbReference>
<dbReference type="FunFam" id="1.10.1740.10:FF:000004">
    <property type="entry name" value="1-deoxy-D-xylulose 5-phosphate reductoisomerase"/>
    <property type="match status" value="1"/>
</dbReference>
<dbReference type="FunFam" id="3.40.50.720:FF:000045">
    <property type="entry name" value="1-deoxy-D-xylulose 5-phosphate reductoisomerase"/>
    <property type="match status" value="1"/>
</dbReference>
<dbReference type="Gene3D" id="1.10.1740.10">
    <property type="match status" value="1"/>
</dbReference>
<dbReference type="Gene3D" id="3.40.50.720">
    <property type="entry name" value="NAD(P)-binding Rossmann-like Domain"/>
    <property type="match status" value="1"/>
</dbReference>
<dbReference type="HAMAP" id="MF_00183">
    <property type="entry name" value="DXP_reductoisom"/>
    <property type="match status" value="1"/>
</dbReference>
<dbReference type="InterPro" id="IPR003821">
    <property type="entry name" value="DXP_reductoisomerase"/>
</dbReference>
<dbReference type="InterPro" id="IPR013644">
    <property type="entry name" value="DXP_reductoisomerase_C"/>
</dbReference>
<dbReference type="InterPro" id="IPR013512">
    <property type="entry name" value="DXP_reductoisomerase_N"/>
</dbReference>
<dbReference type="InterPro" id="IPR026877">
    <property type="entry name" value="DXPR_C"/>
</dbReference>
<dbReference type="InterPro" id="IPR036169">
    <property type="entry name" value="DXPR_C_sf"/>
</dbReference>
<dbReference type="InterPro" id="IPR036291">
    <property type="entry name" value="NAD(P)-bd_dom_sf"/>
</dbReference>
<dbReference type="NCBIfam" id="TIGR00243">
    <property type="entry name" value="Dxr"/>
    <property type="match status" value="1"/>
</dbReference>
<dbReference type="NCBIfam" id="NF003938">
    <property type="entry name" value="PRK05447.1-1"/>
    <property type="match status" value="1"/>
</dbReference>
<dbReference type="NCBIfam" id="NF009114">
    <property type="entry name" value="PRK12464.1"/>
    <property type="match status" value="1"/>
</dbReference>
<dbReference type="PANTHER" id="PTHR30525">
    <property type="entry name" value="1-DEOXY-D-XYLULOSE 5-PHOSPHATE REDUCTOISOMERASE"/>
    <property type="match status" value="1"/>
</dbReference>
<dbReference type="PANTHER" id="PTHR30525:SF0">
    <property type="entry name" value="1-DEOXY-D-XYLULOSE 5-PHOSPHATE REDUCTOISOMERASE, CHLOROPLASTIC"/>
    <property type="match status" value="1"/>
</dbReference>
<dbReference type="Pfam" id="PF08436">
    <property type="entry name" value="DXP_redisom_C"/>
    <property type="match status" value="1"/>
</dbReference>
<dbReference type="Pfam" id="PF02670">
    <property type="entry name" value="DXP_reductoisom"/>
    <property type="match status" value="1"/>
</dbReference>
<dbReference type="Pfam" id="PF13288">
    <property type="entry name" value="DXPR_C"/>
    <property type="match status" value="1"/>
</dbReference>
<dbReference type="PIRSF" id="PIRSF006205">
    <property type="entry name" value="Dxp_reductismrs"/>
    <property type="match status" value="1"/>
</dbReference>
<dbReference type="SUPFAM" id="SSF69055">
    <property type="entry name" value="1-deoxy-D-xylulose-5-phosphate reductoisomerase, C-terminal domain"/>
    <property type="match status" value="1"/>
</dbReference>
<dbReference type="SUPFAM" id="SSF55347">
    <property type="entry name" value="Glyceraldehyde-3-phosphate dehydrogenase-like, C-terminal domain"/>
    <property type="match status" value="1"/>
</dbReference>
<dbReference type="SUPFAM" id="SSF51735">
    <property type="entry name" value="NAD(P)-binding Rossmann-fold domains"/>
    <property type="match status" value="1"/>
</dbReference>
<accession>Q7N8P3</accession>
<protein>
    <recommendedName>
        <fullName evidence="1">1-deoxy-D-xylulose 5-phosphate reductoisomerase</fullName>
        <shortName evidence="1">DXP reductoisomerase</shortName>
        <ecNumber evidence="1">1.1.1.267</ecNumber>
    </recommendedName>
    <alternativeName>
        <fullName evidence="1">1-deoxyxylulose-5-phosphate reductoisomerase</fullName>
    </alternativeName>
    <alternativeName>
        <fullName evidence="1">2-C-methyl-D-erythritol 4-phosphate synthase</fullName>
    </alternativeName>
</protein>
<name>DXR_PHOLL</name>
<evidence type="ECO:0000255" key="1">
    <source>
        <dbReference type="HAMAP-Rule" id="MF_00183"/>
    </source>
</evidence>
<sequence length="398" mass="43333">MKRLTILGSTGSVGKSTLTVVRNNPDKFKVTALAAGKNIQVMAEQCLEFRPQYAAMADEVSAKELRQLLIEQGCKTEVFFGEQAACDLAALNDVDQVMSGIVGVAGLLPTLAAIRAGKQILLANKESLITSGRFFMDAVAKHNAQLLPIDSEHNAIFQSLPEVIQRNLGRGDLKQYGIANIILTGSGGPFRHTPLEQLAFVTPDQACAHPNWSMGRKISVDSATMMNKGLEYIEACCLFNASAAEMEVVVHPQSVIHSMVRYQDGSVIAQLGTPDMCTPIAYAMAYPNRIASGVEPLDFYSLGTLTFSKPDYERYPCLKLAIEACHAGQAATTVLNAANEEIVKIFLQNGISFTDIAIINRQVVEKLNLSEPQSIEEVLQIDNLARDLAIKTIRSFIR</sequence>
<reference key="1">
    <citation type="journal article" date="2003" name="Nat. Biotechnol.">
        <title>The genome sequence of the entomopathogenic bacterium Photorhabdus luminescens.</title>
        <authorList>
            <person name="Duchaud E."/>
            <person name="Rusniok C."/>
            <person name="Frangeul L."/>
            <person name="Buchrieser C."/>
            <person name="Givaudan A."/>
            <person name="Taourit S."/>
            <person name="Bocs S."/>
            <person name="Boursaux-Eude C."/>
            <person name="Chandler M."/>
            <person name="Charles J.-F."/>
            <person name="Dassa E."/>
            <person name="Derose R."/>
            <person name="Derzelle S."/>
            <person name="Freyssinet G."/>
            <person name="Gaudriault S."/>
            <person name="Medigue C."/>
            <person name="Lanois A."/>
            <person name="Powell K."/>
            <person name="Siguier P."/>
            <person name="Vincent R."/>
            <person name="Wingate V."/>
            <person name="Zouine M."/>
            <person name="Glaser P."/>
            <person name="Boemare N."/>
            <person name="Danchin A."/>
            <person name="Kunst F."/>
        </authorList>
    </citation>
    <scope>NUCLEOTIDE SEQUENCE [LARGE SCALE GENOMIC DNA]</scope>
    <source>
        <strain>DSM 15139 / CIP 105565 / TT01</strain>
    </source>
</reference>